<dbReference type="EC" id="2.1.2.9" evidence="1"/>
<dbReference type="EMBL" id="CP000100">
    <property type="protein sequence ID" value="ABB58140.1"/>
    <property type="molecule type" value="Genomic_DNA"/>
</dbReference>
<dbReference type="RefSeq" id="WP_011244292.1">
    <property type="nucleotide sequence ID" value="NZ_JACJTX010000001.1"/>
</dbReference>
<dbReference type="SMR" id="Q31LC9"/>
<dbReference type="STRING" id="1140.Synpcc7942_2110"/>
<dbReference type="PaxDb" id="1140-Synpcc7942_2110"/>
<dbReference type="GeneID" id="72430986"/>
<dbReference type="KEGG" id="syf:Synpcc7942_2110"/>
<dbReference type="eggNOG" id="COG0223">
    <property type="taxonomic scope" value="Bacteria"/>
</dbReference>
<dbReference type="HOGENOM" id="CLU_033347_1_1_3"/>
<dbReference type="OrthoDB" id="9802815at2"/>
<dbReference type="BioCyc" id="SYNEL:SYNPCC7942_2110-MONOMER"/>
<dbReference type="Proteomes" id="UP000889800">
    <property type="component" value="Chromosome"/>
</dbReference>
<dbReference type="GO" id="GO:0005829">
    <property type="term" value="C:cytosol"/>
    <property type="evidence" value="ECO:0007669"/>
    <property type="project" value="TreeGrafter"/>
</dbReference>
<dbReference type="GO" id="GO:0004479">
    <property type="term" value="F:methionyl-tRNA formyltransferase activity"/>
    <property type="evidence" value="ECO:0007669"/>
    <property type="project" value="UniProtKB-UniRule"/>
</dbReference>
<dbReference type="CDD" id="cd08646">
    <property type="entry name" value="FMT_core_Met-tRNA-FMT_N"/>
    <property type="match status" value="1"/>
</dbReference>
<dbReference type="CDD" id="cd08704">
    <property type="entry name" value="Met_tRNA_FMT_C"/>
    <property type="match status" value="1"/>
</dbReference>
<dbReference type="FunFam" id="3.40.50.12230:FF:000001">
    <property type="entry name" value="Methionyl-tRNA formyltransferase"/>
    <property type="match status" value="1"/>
</dbReference>
<dbReference type="Gene3D" id="3.40.50.12230">
    <property type="match status" value="1"/>
</dbReference>
<dbReference type="HAMAP" id="MF_00182">
    <property type="entry name" value="Formyl_trans"/>
    <property type="match status" value="1"/>
</dbReference>
<dbReference type="InterPro" id="IPR005794">
    <property type="entry name" value="Fmt"/>
</dbReference>
<dbReference type="InterPro" id="IPR005793">
    <property type="entry name" value="Formyl_trans_C"/>
</dbReference>
<dbReference type="InterPro" id="IPR002376">
    <property type="entry name" value="Formyl_transf_N"/>
</dbReference>
<dbReference type="InterPro" id="IPR036477">
    <property type="entry name" value="Formyl_transf_N_sf"/>
</dbReference>
<dbReference type="InterPro" id="IPR011034">
    <property type="entry name" value="Formyl_transferase-like_C_sf"/>
</dbReference>
<dbReference type="InterPro" id="IPR044135">
    <property type="entry name" value="Met-tRNA-FMT_C"/>
</dbReference>
<dbReference type="InterPro" id="IPR041711">
    <property type="entry name" value="Met-tRNA-FMT_N"/>
</dbReference>
<dbReference type="NCBIfam" id="TIGR00460">
    <property type="entry name" value="fmt"/>
    <property type="match status" value="1"/>
</dbReference>
<dbReference type="PANTHER" id="PTHR11138">
    <property type="entry name" value="METHIONYL-TRNA FORMYLTRANSFERASE"/>
    <property type="match status" value="1"/>
</dbReference>
<dbReference type="PANTHER" id="PTHR11138:SF5">
    <property type="entry name" value="METHIONYL-TRNA FORMYLTRANSFERASE, MITOCHONDRIAL"/>
    <property type="match status" value="1"/>
</dbReference>
<dbReference type="Pfam" id="PF02911">
    <property type="entry name" value="Formyl_trans_C"/>
    <property type="match status" value="1"/>
</dbReference>
<dbReference type="Pfam" id="PF00551">
    <property type="entry name" value="Formyl_trans_N"/>
    <property type="match status" value="1"/>
</dbReference>
<dbReference type="SUPFAM" id="SSF50486">
    <property type="entry name" value="FMT C-terminal domain-like"/>
    <property type="match status" value="1"/>
</dbReference>
<dbReference type="SUPFAM" id="SSF53328">
    <property type="entry name" value="Formyltransferase"/>
    <property type="match status" value="1"/>
</dbReference>
<sequence>MRVVFFGTPQFAVPTLQQLLDAPDVEVMAVVSQPDRRRGRGNQVSASPVKALAIAYDLPVWQPERLRRDPEVLSQLQQTQADAFVVVAYGQLLPAEVLAMPRLGCINVHGSLLPAYRGAAPIQWSLINGDRETGIVTMQMDVGMDTGPMLLRWTTPIALDDNSQTLGDRLATAGAELLLQTLRQLDQGHLTAISQNEAEATYARLLQKEDFQLSWDQSALELHNRIRGLYPGASLPVQGDRLKVLASLPLGLGLLLSAAYADWQDWQPDPAAQPGTVLAIAKSLGPIVATREGALLLLQVQPAGRKPLSGWDWANGLRLQEGLSLLE</sequence>
<comment type="function">
    <text evidence="1">Attaches a formyl group to the free amino group of methionyl-tRNA(fMet). The formyl group appears to play a dual role in the initiator identity of N-formylmethionyl-tRNA by promoting its recognition by IF2 and preventing the misappropriation of this tRNA by the elongation apparatus.</text>
</comment>
<comment type="catalytic activity">
    <reaction evidence="1">
        <text>L-methionyl-tRNA(fMet) + (6R)-10-formyltetrahydrofolate = N-formyl-L-methionyl-tRNA(fMet) + (6S)-5,6,7,8-tetrahydrofolate + H(+)</text>
        <dbReference type="Rhea" id="RHEA:24380"/>
        <dbReference type="Rhea" id="RHEA-COMP:9952"/>
        <dbReference type="Rhea" id="RHEA-COMP:9953"/>
        <dbReference type="ChEBI" id="CHEBI:15378"/>
        <dbReference type="ChEBI" id="CHEBI:57453"/>
        <dbReference type="ChEBI" id="CHEBI:78530"/>
        <dbReference type="ChEBI" id="CHEBI:78844"/>
        <dbReference type="ChEBI" id="CHEBI:195366"/>
        <dbReference type="EC" id="2.1.2.9"/>
    </reaction>
</comment>
<comment type="similarity">
    <text evidence="1">Belongs to the Fmt family.</text>
</comment>
<accession>Q31LC9</accession>
<name>FMT_SYNE7</name>
<feature type="chain" id="PRO_1000020189" description="Methionyl-tRNA formyltransferase">
    <location>
        <begin position="1"/>
        <end position="327"/>
    </location>
</feature>
<feature type="binding site" evidence="1">
    <location>
        <begin position="111"/>
        <end position="114"/>
    </location>
    <ligand>
        <name>(6S)-5,6,7,8-tetrahydrofolate</name>
        <dbReference type="ChEBI" id="CHEBI:57453"/>
    </ligand>
</feature>
<protein>
    <recommendedName>
        <fullName evidence="1">Methionyl-tRNA formyltransferase</fullName>
        <ecNumber evidence="1">2.1.2.9</ecNumber>
    </recommendedName>
</protein>
<keyword id="KW-0648">Protein biosynthesis</keyword>
<keyword id="KW-1185">Reference proteome</keyword>
<keyword id="KW-0808">Transferase</keyword>
<gene>
    <name evidence="1" type="primary">fmt</name>
    <name type="ordered locus">Synpcc7942_2110</name>
</gene>
<organism>
    <name type="scientific">Synechococcus elongatus (strain ATCC 33912 / PCC 7942 / FACHB-805)</name>
    <name type="common">Anacystis nidulans R2</name>
    <dbReference type="NCBI Taxonomy" id="1140"/>
    <lineage>
        <taxon>Bacteria</taxon>
        <taxon>Bacillati</taxon>
        <taxon>Cyanobacteriota</taxon>
        <taxon>Cyanophyceae</taxon>
        <taxon>Synechococcales</taxon>
        <taxon>Synechococcaceae</taxon>
        <taxon>Synechococcus</taxon>
    </lineage>
</organism>
<reference key="1">
    <citation type="submission" date="2005-08" db="EMBL/GenBank/DDBJ databases">
        <title>Complete sequence of chromosome 1 of Synechococcus elongatus PCC 7942.</title>
        <authorList>
            <consortium name="US DOE Joint Genome Institute"/>
            <person name="Copeland A."/>
            <person name="Lucas S."/>
            <person name="Lapidus A."/>
            <person name="Barry K."/>
            <person name="Detter J.C."/>
            <person name="Glavina T."/>
            <person name="Hammon N."/>
            <person name="Israni S."/>
            <person name="Pitluck S."/>
            <person name="Schmutz J."/>
            <person name="Larimer F."/>
            <person name="Land M."/>
            <person name="Kyrpides N."/>
            <person name="Lykidis A."/>
            <person name="Golden S."/>
            <person name="Richardson P."/>
        </authorList>
    </citation>
    <scope>NUCLEOTIDE SEQUENCE [LARGE SCALE GENOMIC DNA]</scope>
    <source>
        <strain>ATCC 33912 / PCC 7942 / FACHB-805</strain>
    </source>
</reference>
<proteinExistence type="inferred from homology"/>
<evidence type="ECO:0000255" key="1">
    <source>
        <dbReference type="HAMAP-Rule" id="MF_00182"/>
    </source>
</evidence>